<keyword id="KW-0903">Direct protein sequencing</keyword>
<keyword id="KW-0348">Hemagglutinin</keyword>
<keyword id="KW-0430">Lectin</keyword>
<keyword id="KW-0677">Repeat</keyword>
<dbReference type="SMR" id="P86177"/>
<dbReference type="GO" id="GO:0060473">
    <property type="term" value="C:cortical granule"/>
    <property type="evidence" value="ECO:0000250"/>
    <property type="project" value="AgBase"/>
</dbReference>
<dbReference type="GO" id="GO:0009898">
    <property type="term" value="C:cytoplasmic side of plasma membrane"/>
    <property type="evidence" value="ECO:0000250"/>
    <property type="project" value="AgBase"/>
</dbReference>
<dbReference type="GO" id="GO:0005615">
    <property type="term" value="C:extracellular space"/>
    <property type="evidence" value="ECO:0000250"/>
    <property type="project" value="AgBase"/>
</dbReference>
<dbReference type="GO" id="GO:0042585">
    <property type="term" value="C:germinal vesicle"/>
    <property type="evidence" value="ECO:0000250"/>
    <property type="project" value="AgBase"/>
</dbReference>
<dbReference type="GO" id="GO:0098595">
    <property type="term" value="C:perivitelline space"/>
    <property type="evidence" value="ECO:0000250"/>
    <property type="project" value="AgBase"/>
</dbReference>
<dbReference type="GO" id="GO:0005534">
    <property type="term" value="F:galactose binding"/>
    <property type="evidence" value="ECO:0000250"/>
    <property type="project" value="AgBase"/>
</dbReference>
<dbReference type="GO" id="GO:1903777">
    <property type="term" value="F:melibiose binding"/>
    <property type="evidence" value="ECO:0000250"/>
    <property type="project" value="AgBase"/>
</dbReference>
<dbReference type="GO" id="GO:0033296">
    <property type="term" value="F:rhamnose binding"/>
    <property type="evidence" value="ECO:0000250"/>
    <property type="project" value="AgBase"/>
</dbReference>
<dbReference type="CDD" id="cd22833">
    <property type="entry name" value="Gal_Rha_Lectin_CSL1-2_RBL_SML_rpt1"/>
    <property type="match status" value="1"/>
</dbReference>
<dbReference type="CDD" id="cd22834">
    <property type="entry name" value="Gal_Rha_Lectin_CSL1_rpt2"/>
    <property type="match status" value="1"/>
</dbReference>
<dbReference type="FunFam" id="2.60.120.740:FF:000003">
    <property type="entry name" value="Protein eva-1 homolog C"/>
    <property type="match status" value="2"/>
</dbReference>
<dbReference type="Gene3D" id="2.60.120.740">
    <property type="match status" value="2"/>
</dbReference>
<dbReference type="InterPro" id="IPR000922">
    <property type="entry name" value="Lectin_gal-bd_dom"/>
</dbReference>
<dbReference type="InterPro" id="IPR043159">
    <property type="entry name" value="Lectin_gal-bd_sf"/>
</dbReference>
<dbReference type="PANTHER" id="PTHR46780">
    <property type="entry name" value="PROTEIN EVA-1"/>
    <property type="match status" value="1"/>
</dbReference>
<dbReference type="Pfam" id="PF02140">
    <property type="entry name" value="SUEL_Lectin"/>
    <property type="match status" value="2"/>
</dbReference>
<dbReference type="PROSITE" id="PS50228">
    <property type="entry name" value="SUEL_LECTIN"/>
    <property type="match status" value="2"/>
</dbReference>
<name>CSL1_ONCKE</name>
<organism>
    <name type="scientific">Oncorhynchus keta</name>
    <name type="common">Chum salmon</name>
    <name type="synonym">Salmo keta</name>
    <dbReference type="NCBI Taxonomy" id="8018"/>
    <lineage>
        <taxon>Eukaryota</taxon>
        <taxon>Metazoa</taxon>
        <taxon>Chordata</taxon>
        <taxon>Craniata</taxon>
        <taxon>Vertebrata</taxon>
        <taxon>Euteleostomi</taxon>
        <taxon>Actinopterygii</taxon>
        <taxon>Neopterygii</taxon>
        <taxon>Teleostei</taxon>
        <taxon>Protacanthopterygii</taxon>
        <taxon>Salmoniformes</taxon>
        <taxon>Salmonidae</taxon>
        <taxon>Salmoninae</taxon>
        <taxon>Oncorhynchus</taxon>
    </lineage>
</organism>
<feature type="chain" id="PRO_0000366202" description="L-rhamnose-binding lectin CSL1">
    <location>
        <begin position="1"/>
        <end position="286"/>
    </location>
</feature>
<feature type="domain" description="SUEL-type lectin 1" evidence="1">
    <location>
        <begin position="96"/>
        <end position="186"/>
    </location>
</feature>
<feature type="domain" description="SUEL-type lectin 2" evidence="1">
    <location>
        <begin position="193"/>
        <end position="280"/>
    </location>
</feature>
<comment type="function">
    <text evidence="2">L-rhamnose binding lectin. Has hemagglutinating activity towards rabbit erythrocytes, but not human type B erythrocytes. Hemagglutinating activity is inhibited by smooth-type lipopolysaccharide (LPS) from K.pneumoniae, E.coli K-235, S.flexneri 1A, A.salmonicida and S.minnesota and rough-type LPS from S.flexneri, but not by rough-type LPS from E.coli K12 and E.coli EH100. Agglutinates E.coli K12 and B.subtilis.</text>
</comment>
<comment type="biophysicochemical properties">
    <temperatureDependence>
        <text evidence="2">Retains hemagglutinating activity after heating at 50 degrees Celsius for 120 minutes. Activity is abolished by heating at 80 degrees Celsius for 90 minutes.</text>
    </temperatureDependence>
</comment>
<sequence>EIQRRFLTCGDPSLQCDYGVIMVYGVQFSTIELSSNERPKACSDTEAKNGPSNRCDGNEKCDVATSGSVCDLCNSAYLTNIFLDVTYGCLESKKVTTCEGVVHLECGDGVVFLQKALYGRIDSQTCSQGRPQSQLTNTKCSQEGTLALWSQRCDGKQTCEVNMRVNQISDPCVGTYKYLDVTYICLPAKTSITCEGSTSSLDCGKGVIKVFHANYGRRDGSTCSAGRHELSNQNCLQPKTLDVVKQWCEGKSQCTLGLDPVFGDPCFGTYKYLEVSYTCLGGSPTV</sequence>
<proteinExistence type="evidence at protein level"/>
<protein>
    <recommendedName>
        <fullName evidence="3">L-rhamnose-binding lectin CSL1</fullName>
    </recommendedName>
</protein>
<accession>P86177</accession>
<evidence type="ECO:0000255" key="1">
    <source>
        <dbReference type="PROSITE-ProRule" id="PRU00260"/>
    </source>
</evidence>
<evidence type="ECO:0000269" key="2">
    <source ref="1"/>
</evidence>
<evidence type="ECO:0000303" key="3">
    <source ref="1"/>
</evidence>
<evidence type="ECO:0000305" key="4"/>
<reference evidence="4" key="1">
    <citation type="journal article" date="2002" name="Fish. Sci.">
        <title>Isolation and characterization of L-rhamnose-binding lectins from chum salmon (Oncorhynchus keta) eggs.</title>
        <authorList>
            <person name="Shiina N."/>
            <person name="Tateno H."/>
            <person name="Ogawa T."/>
            <person name="Muramoto K."/>
            <person name="Saneyoshi M."/>
            <person name="Kamiya H."/>
        </authorList>
    </citation>
    <scope>PROTEIN SEQUENCE</scope>
    <scope>FUNCTION</scope>
    <scope>BIOPHYSICOCHEMICAL PROPERTIES</scope>
    <source>
        <tissue evidence="2">Egg</tissue>
    </source>
</reference>